<sequence>MKLHELKPAQGSTKAPKRLGRGIGSGTGKTSGKGHKGQKARAGGGVRPGFEGGQQPLSRRMPKRGFTNIFKKEYVVLNVRDLEERFENGAVVGYESLFEVGLIKTIKDGVKILGTGELTKALTVQVDKVSQTAAEKIVAAGGKVEVE</sequence>
<feature type="chain" id="PRO_1000166290" description="Large ribosomal subunit protein uL15">
    <location>
        <begin position="1"/>
        <end position="147"/>
    </location>
</feature>
<feature type="region of interest" description="Disordered" evidence="2">
    <location>
        <begin position="1"/>
        <end position="62"/>
    </location>
</feature>
<feature type="compositionally biased region" description="Gly residues" evidence="2">
    <location>
        <begin position="21"/>
        <end position="31"/>
    </location>
</feature>
<feature type="compositionally biased region" description="Gly residues" evidence="2">
    <location>
        <begin position="42"/>
        <end position="52"/>
    </location>
</feature>
<proteinExistence type="inferred from homology"/>
<keyword id="KW-0687">Ribonucleoprotein</keyword>
<keyword id="KW-0689">Ribosomal protein</keyword>
<keyword id="KW-0694">RNA-binding</keyword>
<keyword id="KW-0699">rRNA-binding</keyword>
<protein>
    <recommendedName>
        <fullName evidence="1">Large ribosomal subunit protein uL15</fullName>
    </recommendedName>
    <alternativeName>
        <fullName evidence="3">50S ribosomal protein L15</fullName>
    </alternativeName>
</protein>
<dbReference type="EMBL" id="CP001336">
    <property type="protein sequence ID" value="ACL18508.1"/>
    <property type="molecule type" value="Genomic_DNA"/>
</dbReference>
<dbReference type="RefSeq" id="WP_015942765.1">
    <property type="nucleotide sequence ID" value="NC_011830.1"/>
</dbReference>
<dbReference type="SMR" id="B8G1Y5"/>
<dbReference type="KEGG" id="dhd:Dhaf_0441"/>
<dbReference type="HOGENOM" id="CLU_055188_4_2_9"/>
<dbReference type="Proteomes" id="UP000007726">
    <property type="component" value="Chromosome"/>
</dbReference>
<dbReference type="GO" id="GO:0022625">
    <property type="term" value="C:cytosolic large ribosomal subunit"/>
    <property type="evidence" value="ECO:0007669"/>
    <property type="project" value="TreeGrafter"/>
</dbReference>
<dbReference type="GO" id="GO:0019843">
    <property type="term" value="F:rRNA binding"/>
    <property type="evidence" value="ECO:0007669"/>
    <property type="project" value="UniProtKB-UniRule"/>
</dbReference>
<dbReference type="GO" id="GO:0003735">
    <property type="term" value="F:structural constituent of ribosome"/>
    <property type="evidence" value="ECO:0007669"/>
    <property type="project" value="InterPro"/>
</dbReference>
<dbReference type="GO" id="GO:0006412">
    <property type="term" value="P:translation"/>
    <property type="evidence" value="ECO:0007669"/>
    <property type="project" value="UniProtKB-UniRule"/>
</dbReference>
<dbReference type="Gene3D" id="3.100.10.10">
    <property type="match status" value="1"/>
</dbReference>
<dbReference type="HAMAP" id="MF_01341">
    <property type="entry name" value="Ribosomal_uL15"/>
    <property type="match status" value="1"/>
</dbReference>
<dbReference type="InterPro" id="IPR030878">
    <property type="entry name" value="Ribosomal_uL15"/>
</dbReference>
<dbReference type="InterPro" id="IPR021131">
    <property type="entry name" value="Ribosomal_uL15/eL18"/>
</dbReference>
<dbReference type="InterPro" id="IPR036227">
    <property type="entry name" value="Ribosomal_uL15/eL18_sf"/>
</dbReference>
<dbReference type="InterPro" id="IPR005749">
    <property type="entry name" value="Ribosomal_uL15_bac-type"/>
</dbReference>
<dbReference type="InterPro" id="IPR001196">
    <property type="entry name" value="Ribosomal_uL15_CS"/>
</dbReference>
<dbReference type="NCBIfam" id="TIGR01071">
    <property type="entry name" value="rplO_bact"/>
    <property type="match status" value="1"/>
</dbReference>
<dbReference type="PANTHER" id="PTHR12934">
    <property type="entry name" value="50S RIBOSOMAL PROTEIN L15"/>
    <property type="match status" value="1"/>
</dbReference>
<dbReference type="PANTHER" id="PTHR12934:SF11">
    <property type="entry name" value="LARGE RIBOSOMAL SUBUNIT PROTEIN UL15M"/>
    <property type="match status" value="1"/>
</dbReference>
<dbReference type="Pfam" id="PF00828">
    <property type="entry name" value="Ribosomal_L27A"/>
    <property type="match status" value="1"/>
</dbReference>
<dbReference type="SUPFAM" id="SSF52080">
    <property type="entry name" value="Ribosomal proteins L15p and L18e"/>
    <property type="match status" value="1"/>
</dbReference>
<dbReference type="PROSITE" id="PS00475">
    <property type="entry name" value="RIBOSOMAL_L15"/>
    <property type="match status" value="1"/>
</dbReference>
<name>RL15_DESHD</name>
<gene>
    <name evidence="1" type="primary">rplO</name>
    <name type="ordered locus">Dhaf_0441</name>
</gene>
<accession>B8G1Y5</accession>
<comment type="function">
    <text evidence="1">Binds to the 23S rRNA.</text>
</comment>
<comment type="subunit">
    <text evidence="1">Part of the 50S ribosomal subunit.</text>
</comment>
<comment type="similarity">
    <text evidence="1">Belongs to the universal ribosomal protein uL15 family.</text>
</comment>
<evidence type="ECO:0000255" key="1">
    <source>
        <dbReference type="HAMAP-Rule" id="MF_01341"/>
    </source>
</evidence>
<evidence type="ECO:0000256" key="2">
    <source>
        <dbReference type="SAM" id="MobiDB-lite"/>
    </source>
</evidence>
<evidence type="ECO:0000305" key="3"/>
<reference key="1">
    <citation type="journal article" date="2012" name="BMC Microbiol.">
        <title>Genome sequence of Desulfitobacterium hafniense DCB-2, a Gram-positive anaerobe capable of dehalogenation and metal reduction.</title>
        <authorList>
            <person name="Kim S.H."/>
            <person name="Harzman C."/>
            <person name="Davis J.K."/>
            <person name="Hutcheson R."/>
            <person name="Broderick J.B."/>
            <person name="Marsh T.L."/>
            <person name="Tiedje J.M."/>
        </authorList>
    </citation>
    <scope>NUCLEOTIDE SEQUENCE [LARGE SCALE GENOMIC DNA]</scope>
    <source>
        <strain>DSM 10664 / DCB-2</strain>
    </source>
</reference>
<organism>
    <name type="scientific">Desulfitobacterium hafniense (strain DSM 10664 / DCB-2)</name>
    <dbReference type="NCBI Taxonomy" id="272564"/>
    <lineage>
        <taxon>Bacteria</taxon>
        <taxon>Bacillati</taxon>
        <taxon>Bacillota</taxon>
        <taxon>Clostridia</taxon>
        <taxon>Eubacteriales</taxon>
        <taxon>Desulfitobacteriaceae</taxon>
        <taxon>Desulfitobacterium</taxon>
    </lineage>
</organism>